<gene>
    <name type="ordered locus">VV2842</name>
</gene>
<keyword id="KW-0963">Cytoplasm</keyword>
<keyword id="KW-0290">Folate-binding</keyword>
<keyword id="KW-0819">tRNA processing</keyword>
<reference key="1">
    <citation type="journal article" date="2003" name="Genome Res.">
        <title>Comparative genome analysis of Vibrio vulnificus, a marine pathogen.</title>
        <authorList>
            <person name="Chen C.-Y."/>
            <person name="Wu K.-M."/>
            <person name="Chang Y.-C."/>
            <person name="Chang C.-H."/>
            <person name="Tsai H.-C."/>
            <person name="Liao T.-L."/>
            <person name="Liu Y.-M."/>
            <person name="Chen H.-J."/>
            <person name="Shen A.B.-T."/>
            <person name="Li J.-C."/>
            <person name="Su T.-L."/>
            <person name="Shao C.-P."/>
            <person name="Lee C.-T."/>
            <person name="Hor L.-I."/>
            <person name="Tsai S.-F."/>
        </authorList>
    </citation>
    <scope>NUCLEOTIDE SEQUENCE [LARGE SCALE GENOMIC DNA]</scope>
    <source>
        <strain>YJ016</strain>
    </source>
</reference>
<dbReference type="EMBL" id="BA000037">
    <property type="protein sequence ID" value="BAC95606.1"/>
    <property type="status" value="ALT_INIT"/>
    <property type="molecule type" value="Genomic_DNA"/>
</dbReference>
<dbReference type="RefSeq" id="WP_043877319.1">
    <property type="nucleotide sequence ID" value="NC_005139.1"/>
</dbReference>
<dbReference type="SMR" id="Q7MHM7"/>
<dbReference type="STRING" id="672.VV93_v1c25500"/>
<dbReference type="KEGG" id="vvy:VV2842"/>
<dbReference type="PATRIC" id="fig|196600.6.peg.2830"/>
<dbReference type="eggNOG" id="COG0354">
    <property type="taxonomic scope" value="Bacteria"/>
</dbReference>
<dbReference type="HOGENOM" id="CLU_007884_6_1_6"/>
<dbReference type="Proteomes" id="UP000002675">
    <property type="component" value="Chromosome I"/>
</dbReference>
<dbReference type="GO" id="GO:0005737">
    <property type="term" value="C:cytoplasm"/>
    <property type="evidence" value="ECO:0007669"/>
    <property type="project" value="UniProtKB-SubCell"/>
</dbReference>
<dbReference type="GO" id="GO:0005542">
    <property type="term" value="F:folic acid binding"/>
    <property type="evidence" value="ECO:0007669"/>
    <property type="project" value="UniProtKB-UniRule"/>
</dbReference>
<dbReference type="GO" id="GO:0016226">
    <property type="term" value="P:iron-sulfur cluster assembly"/>
    <property type="evidence" value="ECO:0007669"/>
    <property type="project" value="TreeGrafter"/>
</dbReference>
<dbReference type="GO" id="GO:0009451">
    <property type="term" value="P:RNA modification"/>
    <property type="evidence" value="ECO:0007669"/>
    <property type="project" value="InterPro"/>
</dbReference>
<dbReference type="GO" id="GO:0008033">
    <property type="term" value="P:tRNA processing"/>
    <property type="evidence" value="ECO:0007669"/>
    <property type="project" value="UniProtKB-UniRule"/>
</dbReference>
<dbReference type="FunFam" id="3.30.70.1400:FF:000002">
    <property type="entry name" value="tRNA-modifying protein YgfZ"/>
    <property type="match status" value="1"/>
</dbReference>
<dbReference type="Gene3D" id="2.40.30.160">
    <property type="match status" value="1"/>
</dbReference>
<dbReference type="Gene3D" id="3.30.70.1630">
    <property type="match status" value="1"/>
</dbReference>
<dbReference type="Gene3D" id="3.30.70.1400">
    <property type="entry name" value="Aminomethyltransferase beta-barrel domains"/>
    <property type="match status" value="1"/>
</dbReference>
<dbReference type="HAMAP" id="MF_01175">
    <property type="entry name" value="tRNA_modifying_YgfZ"/>
    <property type="match status" value="1"/>
</dbReference>
<dbReference type="InterPro" id="IPR029043">
    <property type="entry name" value="GcvT/YgfZ_C"/>
</dbReference>
<dbReference type="InterPro" id="IPR023758">
    <property type="entry name" value="tRNA-modifying_YgfZ"/>
</dbReference>
<dbReference type="InterPro" id="IPR045179">
    <property type="entry name" value="YgfZ/GcvT"/>
</dbReference>
<dbReference type="InterPro" id="IPR017703">
    <property type="entry name" value="YgfZ/GcvT_CS"/>
</dbReference>
<dbReference type="InterPro" id="IPR048451">
    <property type="entry name" value="YgfZ_barrel"/>
</dbReference>
<dbReference type="NCBIfam" id="NF007110">
    <property type="entry name" value="PRK09559.1"/>
    <property type="match status" value="1"/>
</dbReference>
<dbReference type="NCBIfam" id="TIGR03317">
    <property type="entry name" value="ygfZ_signature"/>
    <property type="match status" value="1"/>
</dbReference>
<dbReference type="PANTHER" id="PTHR22602">
    <property type="entry name" value="TRANSFERASE CAF17, MITOCHONDRIAL-RELATED"/>
    <property type="match status" value="1"/>
</dbReference>
<dbReference type="PANTHER" id="PTHR22602:SF0">
    <property type="entry name" value="TRANSFERASE CAF17, MITOCHONDRIAL-RELATED"/>
    <property type="match status" value="1"/>
</dbReference>
<dbReference type="Pfam" id="PF21130">
    <property type="entry name" value="YgfZ_barrel"/>
    <property type="match status" value="1"/>
</dbReference>
<dbReference type="SUPFAM" id="SSF101790">
    <property type="entry name" value="Aminomethyltransferase beta-barrel domain"/>
    <property type="match status" value="1"/>
</dbReference>
<dbReference type="SUPFAM" id="SSF103025">
    <property type="entry name" value="Folate-binding domain"/>
    <property type="match status" value="1"/>
</dbReference>
<accession>Q7MHM7</accession>
<evidence type="ECO:0000255" key="1">
    <source>
        <dbReference type="HAMAP-Rule" id="MF_01175"/>
    </source>
</evidence>
<evidence type="ECO:0000305" key="2"/>
<protein>
    <recommendedName>
        <fullName evidence="1">tRNA-modifying protein YgfZ</fullName>
    </recommendedName>
</protein>
<sequence length="324" mass="35527">MQSTQPIQRCALGSQQALPELAVSLLDNLGLITMTGNDKKSYLQGQVTCDVVSLEADQVTWGGHCDAKGKLWSAFRLFHYGDGYAMLQDKSAIDVELRELKKYAVFAKVEINVSDAILLGVCGVQAEQAIAKLTNNAEAAVATFAQGTAVKISPQRWLLVVDANQQDEVLAMLATAPLCDHALWDLYDILEVSPRIPAFAQNEHIPQAVNLQAVNGISFKKGCYTGQETVARAKYRGINKRALYRLSGAIEPSAPETTISLERSVGDNWRAAGEALVSYHFDDGRATGLFVLPNDLEPETQFRLAGQSEQLWQREPLPYSLDDE</sequence>
<feature type="chain" id="PRO_0000262907" description="tRNA-modifying protein YgfZ">
    <location>
        <begin position="1"/>
        <end position="324"/>
    </location>
</feature>
<feature type="binding site" evidence="1">
    <location>
        <position position="184"/>
    </location>
    <ligand>
        <name>folate</name>
        <dbReference type="ChEBI" id="CHEBI:62501"/>
    </ligand>
</feature>
<comment type="function">
    <text evidence="1">Folate-binding protein involved in regulating the level of ATP-DnaA and in the modification of some tRNAs. It is probably a key factor in regulatory networks that act via tRNA modification, such as initiation of chromosomal replication.</text>
</comment>
<comment type="subcellular location">
    <subcellularLocation>
        <location evidence="1">Cytoplasm</location>
    </subcellularLocation>
</comment>
<comment type="similarity">
    <text evidence="1">Belongs to the tRNA-modifying YgfZ family.</text>
</comment>
<comment type="sequence caution" evidence="2">
    <conflict type="erroneous initiation">
        <sequence resource="EMBL-CDS" id="BAC95606"/>
    </conflict>
</comment>
<name>YGFZ_VIBVY</name>
<organism>
    <name type="scientific">Vibrio vulnificus (strain YJ016)</name>
    <dbReference type="NCBI Taxonomy" id="196600"/>
    <lineage>
        <taxon>Bacteria</taxon>
        <taxon>Pseudomonadati</taxon>
        <taxon>Pseudomonadota</taxon>
        <taxon>Gammaproteobacteria</taxon>
        <taxon>Vibrionales</taxon>
        <taxon>Vibrionaceae</taxon>
        <taxon>Vibrio</taxon>
    </lineage>
</organism>
<proteinExistence type="inferred from homology"/>